<organism>
    <name type="scientific">Homo sapiens</name>
    <name type="common">Human</name>
    <dbReference type="NCBI Taxonomy" id="9606"/>
    <lineage>
        <taxon>Eukaryota</taxon>
        <taxon>Metazoa</taxon>
        <taxon>Chordata</taxon>
        <taxon>Craniata</taxon>
        <taxon>Vertebrata</taxon>
        <taxon>Euteleostomi</taxon>
        <taxon>Mammalia</taxon>
        <taxon>Eutheria</taxon>
        <taxon>Euarchontoglires</taxon>
        <taxon>Primates</taxon>
        <taxon>Haplorrhini</taxon>
        <taxon>Catarrhini</taxon>
        <taxon>Hominidae</taxon>
        <taxon>Homo</taxon>
    </lineage>
</organism>
<gene>
    <name type="primary">CD300LG</name>
    <name type="synonym">CLM9</name>
    <name type="synonym">TREM4</name>
    <name type="ORF">UNQ422/PRO846</name>
</gene>
<protein>
    <recommendedName>
        <fullName>CMRF35-like molecule 9</fullName>
        <shortName>CLM-9</shortName>
    </recommendedName>
    <alternativeName>
        <fullName>CD300 antigen-like family member G</fullName>
    </alternativeName>
    <alternativeName>
        <fullName>Triggering receptor expressed on myeloid cells 4</fullName>
        <shortName>TREM-4</shortName>
    </alternativeName>
    <cdAntigenName>CD300g</cdAntigenName>
</protein>
<name>CLM9_HUMAN</name>
<accession>Q6UXG3</accession>
<accession>B4DNY5</accession>
<accession>F5H7P9</accession>
<accession>F8W9M3</accession>
<accession>Q8IX38</accession>
<accession>Q8IX39</accession>
<accession>Q8TA95</accession>
<proteinExistence type="evidence at protein level"/>
<reference key="1">
    <citation type="submission" date="2001-10" db="EMBL/GenBank/DDBJ databases">
        <title>Triggering receptor expressed on myeloid cells 4.</title>
        <authorList>
            <person name="Colonna M."/>
        </authorList>
    </citation>
    <scope>NUCLEOTIDE SEQUENCE [MRNA] (ISOFORMS 2 AND 3)</scope>
</reference>
<reference key="2">
    <citation type="journal article" date="2003" name="Genome Res.">
        <title>The secreted protein discovery initiative (SPDI), a large-scale effort to identify novel human secreted and transmembrane proteins: a bioinformatics assessment.</title>
        <authorList>
            <person name="Clark H.F."/>
            <person name="Gurney A.L."/>
            <person name="Abaya E."/>
            <person name="Baker K."/>
            <person name="Baldwin D.T."/>
            <person name="Brush J."/>
            <person name="Chen J."/>
            <person name="Chow B."/>
            <person name="Chui C."/>
            <person name="Crowley C."/>
            <person name="Currell B."/>
            <person name="Deuel B."/>
            <person name="Dowd P."/>
            <person name="Eaton D."/>
            <person name="Foster J.S."/>
            <person name="Grimaldi C."/>
            <person name="Gu Q."/>
            <person name="Hass P.E."/>
            <person name="Heldens S."/>
            <person name="Huang A."/>
            <person name="Kim H.S."/>
            <person name="Klimowski L."/>
            <person name="Jin Y."/>
            <person name="Johnson S."/>
            <person name="Lee J."/>
            <person name="Lewis L."/>
            <person name="Liao D."/>
            <person name="Mark M.R."/>
            <person name="Robbie E."/>
            <person name="Sanchez C."/>
            <person name="Schoenfeld J."/>
            <person name="Seshagiri S."/>
            <person name="Simmons L."/>
            <person name="Singh J."/>
            <person name="Smith V."/>
            <person name="Stinson J."/>
            <person name="Vagts A."/>
            <person name="Vandlen R.L."/>
            <person name="Watanabe C."/>
            <person name="Wieand D."/>
            <person name="Woods K."/>
            <person name="Xie M.-H."/>
            <person name="Yansura D.G."/>
            <person name="Yi S."/>
            <person name="Yu G."/>
            <person name="Yuan J."/>
            <person name="Zhang M."/>
            <person name="Zhang Z."/>
            <person name="Goddard A.D."/>
            <person name="Wood W.I."/>
            <person name="Godowski P.J."/>
            <person name="Gray A.M."/>
        </authorList>
    </citation>
    <scope>NUCLEOTIDE SEQUENCE [LARGE SCALE MRNA] (ISOFORM 1)</scope>
</reference>
<reference key="3">
    <citation type="journal article" date="2004" name="Nat. Genet.">
        <title>Complete sequencing and characterization of 21,243 full-length human cDNAs.</title>
        <authorList>
            <person name="Ota T."/>
            <person name="Suzuki Y."/>
            <person name="Nishikawa T."/>
            <person name="Otsuki T."/>
            <person name="Sugiyama T."/>
            <person name="Irie R."/>
            <person name="Wakamatsu A."/>
            <person name="Hayashi K."/>
            <person name="Sato H."/>
            <person name="Nagai K."/>
            <person name="Kimura K."/>
            <person name="Makita H."/>
            <person name="Sekine M."/>
            <person name="Obayashi M."/>
            <person name="Nishi T."/>
            <person name="Shibahara T."/>
            <person name="Tanaka T."/>
            <person name="Ishii S."/>
            <person name="Yamamoto J."/>
            <person name="Saito K."/>
            <person name="Kawai Y."/>
            <person name="Isono Y."/>
            <person name="Nakamura Y."/>
            <person name="Nagahari K."/>
            <person name="Murakami K."/>
            <person name="Yasuda T."/>
            <person name="Iwayanagi T."/>
            <person name="Wagatsuma M."/>
            <person name="Shiratori A."/>
            <person name="Sudo H."/>
            <person name="Hosoiri T."/>
            <person name="Kaku Y."/>
            <person name="Kodaira H."/>
            <person name="Kondo H."/>
            <person name="Sugawara M."/>
            <person name="Takahashi M."/>
            <person name="Kanda K."/>
            <person name="Yokoi T."/>
            <person name="Furuya T."/>
            <person name="Kikkawa E."/>
            <person name="Omura Y."/>
            <person name="Abe K."/>
            <person name="Kamihara K."/>
            <person name="Katsuta N."/>
            <person name="Sato K."/>
            <person name="Tanikawa M."/>
            <person name="Yamazaki M."/>
            <person name="Ninomiya K."/>
            <person name="Ishibashi T."/>
            <person name="Yamashita H."/>
            <person name="Murakawa K."/>
            <person name="Fujimori K."/>
            <person name="Tanai H."/>
            <person name="Kimata M."/>
            <person name="Watanabe M."/>
            <person name="Hiraoka S."/>
            <person name="Chiba Y."/>
            <person name="Ishida S."/>
            <person name="Ono Y."/>
            <person name="Takiguchi S."/>
            <person name="Watanabe S."/>
            <person name="Yosida M."/>
            <person name="Hotuta T."/>
            <person name="Kusano J."/>
            <person name="Kanehori K."/>
            <person name="Takahashi-Fujii A."/>
            <person name="Hara H."/>
            <person name="Tanase T.-O."/>
            <person name="Nomura Y."/>
            <person name="Togiya S."/>
            <person name="Komai F."/>
            <person name="Hara R."/>
            <person name="Takeuchi K."/>
            <person name="Arita M."/>
            <person name="Imose N."/>
            <person name="Musashino K."/>
            <person name="Yuuki H."/>
            <person name="Oshima A."/>
            <person name="Sasaki N."/>
            <person name="Aotsuka S."/>
            <person name="Yoshikawa Y."/>
            <person name="Matsunawa H."/>
            <person name="Ichihara T."/>
            <person name="Shiohata N."/>
            <person name="Sano S."/>
            <person name="Moriya S."/>
            <person name="Momiyama H."/>
            <person name="Satoh N."/>
            <person name="Takami S."/>
            <person name="Terashima Y."/>
            <person name="Suzuki O."/>
            <person name="Nakagawa S."/>
            <person name="Senoh A."/>
            <person name="Mizoguchi H."/>
            <person name="Goto Y."/>
            <person name="Shimizu F."/>
            <person name="Wakebe H."/>
            <person name="Hishigaki H."/>
            <person name="Watanabe T."/>
            <person name="Sugiyama A."/>
            <person name="Takemoto M."/>
            <person name="Kawakami B."/>
            <person name="Yamazaki M."/>
            <person name="Watanabe K."/>
            <person name="Kumagai A."/>
            <person name="Itakura S."/>
            <person name="Fukuzumi Y."/>
            <person name="Fujimori Y."/>
            <person name="Komiyama M."/>
            <person name="Tashiro H."/>
            <person name="Tanigami A."/>
            <person name="Fujiwara T."/>
            <person name="Ono T."/>
            <person name="Yamada K."/>
            <person name="Fujii Y."/>
            <person name="Ozaki K."/>
            <person name="Hirao M."/>
            <person name="Ohmori Y."/>
            <person name="Kawabata A."/>
            <person name="Hikiji T."/>
            <person name="Kobatake N."/>
            <person name="Inagaki H."/>
            <person name="Ikema Y."/>
            <person name="Okamoto S."/>
            <person name="Okitani R."/>
            <person name="Kawakami T."/>
            <person name="Noguchi S."/>
            <person name="Itoh T."/>
            <person name="Shigeta K."/>
            <person name="Senba T."/>
            <person name="Matsumura K."/>
            <person name="Nakajima Y."/>
            <person name="Mizuno T."/>
            <person name="Morinaga M."/>
            <person name="Sasaki M."/>
            <person name="Togashi T."/>
            <person name="Oyama M."/>
            <person name="Hata H."/>
            <person name="Watanabe M."/>
            <person name="Komatsu T."/>
            <person name="Mizushima-Sugano J."/>
            <person name="Satoh T."/>
            <person name="Shirai Y."/>
            <person name="Takahashi Y."/>
            <person name="Nakagawa K."/>
            <person name="Okumura K."/>
            <person name="Nagase T."/>
            <person name="Nomura N."/>
            <person name="Kikuchi H."/>
            <person name="Masuho Y."/>
            <person name="Yamashita R."/>
            <person name="Nakai K."/>
            <person name="Yada T."/>
            <person name="Nakamura Y."/>
            <person name="Ohara O."/>
            <person name="Isogai T."/>
            <person name="Sugano S."/>
        </authorList>
    </citation>
    <scope>NUCLEOTIDE SEQUENCE [LARGE SCALE MRNA] (ISOFORMS 4 AND 5)</scope>
    <scope>VARIANT ALA-228</scope>
    <source>
        <tissue>Lung</tissue>
        <tissue>Placenta</tissue>
    </source>
</reference>
<reference key="4">
    <citation type="journal article" date="2006" name="Nature">
        <title>DNA sequence of human chromosome 17 and analysis of rearrangement in the human lineage.</title>
        <authorList>
            <person name="Zody M.C."/>
            <person name="Garber M."/>
            <person name="Adams D.J."/>
            <person name="Sharpe T."/>
            <person name="Harrow J."/>
            <person name="Lupski J.R."/>
            <person name="Nicholson C."/>
            <person name="Searle S.M."/>
            <person name="Wilming L."/>
            <person name="Young S.K."/>
            <person name="Abouelleil A."/>
            <person name="Allen N.R."/>
            <person name="Bi W."/>
            <person name="Bloom T."/>
            <person name="Borowsky M.L."/>
            <person name="Bugalter B.E."/>
            <person name="Butler J."/>
            <person name="Chang J.L."/>
            <person name="Chen C.-K."/>
            <person name="Cook A."/>
            <person name="Corum B."/>
            <person name="Cuomo C.A."/>
            <person name="de Jong P.J."/>
            <person name="DeCaprio D."/>
            <person name="Dewar K."/>
            <person name="FitzGerald M."/>
            <person name="Gilbert J."/>
            <person name="Gibson R."/>
            <person name="Gnerre S."/>
            <person name="Goldstein S."/>
            <person name="Grafham D.V."/>
            <person name="Grocock R."/>
            <person name="Hafez N."/>
            <person name="Hagopian D.S."/>
            <person name="Hart E."/>
            <person name="Norman C.H."/>
            <person name="Humphray S."/>
            <person name="Jaffe D.B."/>
            <person name="Jones M."/>
            <person name="Kamal M."/>
            <person name="Khodiyar V.K."/>
            <person name="LaButti K."/>
            <person name="Laird G."/>
            <person name="Lehoczky J."/>
            <person name="Liu X."/>
            <person name="Lokyitsang T."/>
            <person name="Loveland J."/>
            <person name="Lui A."/>
            <person name="Macdonald P."/>
            <person name="Major J.E."/>
            <person name="Matthews L."/>
            <person name="Mauceli E."/>
            <person name="McCarroll S.A."/>
            <person name="Mihalev A.H."/>
            <person name="Mudge J."/>
            <person name="Nguyen C."/>
            <person name="Nicol R."/>
            <person name="O'Leary S.B."/>
            <person name="Osoegawa K."/>
            <person name="Schwartz D.C."/>
            <person name="Shaw-Smith C."/>
            <person name="Stankiewicz P."/>
            <person name="Steward C."/>
            <person name="Swarbreck D."/>
            <person name="Venkataraman V."/>
            <person name="Whittaker C.A."/>
            <person name="Yang X."/>
            <person name="Zimmer A.R."/>
            <person name="Bradley A."/>
            <person name="Hubbard T."/>
            <person name="Birren B.W."/>
            <person name="Rogers J."/>
            <person name="Lander E.S."/>
            <person name="Nusbaum C."/>
        </authorList>
    </citation>
    <scope>NUCLEOTIDE SEQUENCE [LARGE SCALE GENOMIC DNA]</scope>
</reference>
<reference key="5">
    <citation type="journal article" date="2004" name="Genome Res.">
        <title>The status, quality, and expansion of the NIH full-length cDNA project: the Mammalian Gene Collection (MGC).</title>
        <authorList>
            <consortium name="The MGC Project Team"/>
        </authorList>
    </citation>
    <scope>NUCLEOTIDE SEQUENCE [LARGE SCALE MRNA] (ISOFORM 1)</scope>
    <scope>VARIANT ASN-221</scope>
    <source>
        <tissue>Testis</tissue>
    </source>
</reference>
<reference key="6">
    <citation type="journal article" date="2004" name="Protein Sci.">
        <title>Signal peptide prediction based on analysis of experimentally verified cleavage sites.</title>
        <authorList>
            <person name="Zhang Z."/>
            <person name="Henzel W.J."/>
        </authorList>
    </citation>
    <scope>PROTEIN SEQUENCE OF 19-33</scope>
</reference>
<reference key="7">
    <citation type="journal article" date="2006" name="Biochem. Biophys. Res. Commun.">
        <title>CD300 antigen like family member G: a novel Ig receptor like protein exclusively expressed on capillary endothelium.</title>
        <authorList>
            <person name="Takatsu H."/>
            <person name="Hase K."/>
            <person name="Ohmae M."/>
            <person name="Ohshima S."/>
            <person name="Hashimoto K."/>
            <person name="Taniura N."/>
            <person name="Yamamoto A."/>
            <person name="Ohno H."/>
        </authorList>
    </citation>
    <scope>TISSUE SPECIFICITY</scope>
    <scope>ALTERNATIVE SPLICING (ISOFORMS 1; 2 AND 3)</scope>
</reference>
<sequence>MRLLVLLWGCLLLPGYEALEGPEEISGFEGDTVSLQCTYREELRDHRKYWCRKGGILFSRCSGTIYAEEEGQETMKGRVSIRDSRQELSLIVTLWNLTLQDAGEYWCGVEKRGPDESLLISLFVFPGPCCPPSPSPTFQPLATTRLQPKAKAQQTQPPGLTSPGLYPAATTAKQGKTGAEAPPLPGTSQYGHERTSQYTGTSPHPATSPPAGSSRPPMQLDSTSAEDTSPALSSGSSKPRVSIPMVRILAPVLVLLSLLSAAGLIAFCSHLLLWRKEAQQATETQRNEKFCLSRLTAEEKEAPSQAPEGDVISMPPLHTSEEELGFSKFVSA</sequence>
<keyword id="KW-0025">Alternative splicing</keyword>
<keyword id="KW-1003">Cell membrane</keyword>
<keyword id="KW-0903">Direct protein sequencing</keyword>
<keyword id="KW-1015">Disulfide bond</keyword>
<keyword id="KW-0967">Endosome</keyword>
<keyword id="KW-0325">Glycoprotein</keyword>
<keyword id="KW-0391">Immunity</keyword>
<keyword id="KW-0393">Immunoglobulin domain</keyword>
<keyword id="KW-0472">Membrane</keyword>
<keyword id="KW-1267">Proteomics identification</keyword>
<keyword id="KW-0675">Receptor</keyword>
<keyword id="KW-1185">Reference proteome</keyword>
<keyword id="KW-0732">Signal</keyword>
<keyword id="KW-0812">Transmembrane</keyword>
<keyword id="KW-1133">Transmembrane helix</keyword>
<evidence type="ECO:0000250" key="1"/>
<evidence type="ECO:0000250" key="2">
    <source>
        <dbReference type="UniProtKB" id="Q1ERP8"/>
    </source>
</evidence>
<evidence type="ECO:0000255" key="3"/>
<evidence type="ECO:0000255" key="4">
    <source>
        <dbReference type="PROSITE-ProRule" id="PRU00114"/>
    </source>
</evidence>
<evidence type="ECO:0000256" key="5">
    <source>
        <dbReference type="SAM" id="MobiDB-lite"/>
    </source>
</evidence>
<evidence type="ECO:0000269" key="6">
    <source>
    </source>
</evidence>
<evidence type="ECO:0000269" key="7">
    <source>
    </source>
</evidence>
<evidence type="ECO:0000269" key="8">
    <source>
    </source>
</evidence>
<evidence type="ECO:0000269" key="9">
    <source>
    </source>
</evidence>
<evidence type="ECO:0000303" key="10">
    <source>
    </source>
</evidence>
<evidence type="ECO:0000303" key="11">
    <source ref="1"/>
</evidence>
<evidence type="ECO:0000305" key="12"/>
<comment type="function">
    <text evidence="1">Receptor which may mediate L-selectin-dependent lymphocyte rollings. Binds SELL in a calcium dependent manner. Binds lymphocyte (By similarity).</text>
</comment>
<comment type="interaction">
    <interactant intactId="EBI-10254587">
        <id>Q6UXG3</id>
    </interactant>
    <interactant intactId="EBI-3867333">
        <id>A8MQ03</id>
        <label>CYSRT1</label>
    </interactant>
    <organismsDiffer>false</organismsDiffer>
    <experiments>3</experiments>
</comment>
<comment type="interaction">
    <interactant intactId="EBI-10254587">
        <id>Q6UXG3</id>
    </interactant>
    <interactant intactId="EBI-11959885">
        <id>Q07627</id>
        <label>KRTAP1-1</label>
    </interactant>
    <organismsDiffer>false</organismsDiffer>
    <experiments>3</experiments>
</comment>
<comment type="interaction">
    <interactant intactId="EBI-10254587">
        <id>Q6UXG3</id>
    </interactant>
    <interactant intactId="EBI-10172052">
        <id>P60411</id>
        <label>KRTAP10-9</label>
    </interactant>
    <organismsDiffer>false</organismsDiffer>
    <experiments>3</experiments>
</comment>
<comment type="interaction">
    <interactant intactId="EBI-10254587">
        <id>Q6UXG3</id>
    </interactant>
    <interactant intactId="EBI-11987425">
        <id>Q6L8G8</id>
        <label>KRTAP5-7</label>
    </interactant>
    <organismsDiffer>false</organismsDiffer>
    <experiments>3</experiments>
</comment>
<comment type="interaction">
    <interactant intactId="EBI-10254587">
        <id>Q6UXG3</id>
    </interactant>
    <interactant intactId="EBI-3932027">
        <id>P21145</id>
        <label>MAL</label>
    </interactant>
    <organismsDiffer>false</organismsDiffer>
    <experiments>3</experiments>
</comment>
<comment type="interaction">
    <interactant intactId="EBI-10254587">
        <id>Q6UXG3</id>
    </interactant>
    <interactant intactId="EBI-1045825">
        <id>P55061</id>
        <label>TMBIM6</label>
    </interactant>
    <organismsDiffer>false</organismsDiffer>
    <experiments>3</experiments>
</comment>
<comment type="subcellular location">
    <subcellularLocation>
        <location evidence="2">Apical cell membrane</location>
        <topology evidence="2">Single-pass type I membrane protein</topology>
    </subcellularLocation>
    <subcellularLocation>
        <location evidence="2">Basolateral cell membrane</location>
        <topology evidence="2">Single-pass type I membrane protein</topology>
    </subcellularLocation>
    <subcellularLocation>
        <location evidence="2">Endosome</location>
        <location evidence="2">Multivesicular body membrane</location>
        <topology evidence="2">Single-pass type I membrane protein</topology>
    </subcellularLocation>
    <text evidence="2">Transcytoses across the cytoplasm.</text>
</comment>
<comment type="alternative products">
    <event type="alternative splicing"/>
    <isoform>
        <id>Q6UXG3-1</id>
        <name>1</name>
        <name>CD300LG-gamma</name>
        <sequence type="displayed"/>
    </isoform>
    <isoform>
        <id>Q6UXG3-2</id>
        <name>2</name>
        <name>TREM4-alpha</name>
        <name>CD300LG-alpha 1</name>
        <sequence type="described" ref="VSP_028410 VSP_028411"/>
    </isoform>
    <isoform>
        <id>Q6UXG3-3</id>
        <name>3</name>
        <name>TREM4-beta</name>
        <name>CD300LG-alpha 2</name>
        <sequence type="described" ref="VSP_028410 VSP_028412"/>
    </isoform>
    <isoform>
        <id>Q6UXG3-4</id>
        <name>4</name>
        <sequence type="described" ref="VSP_028412"/>
    </isoform>
    <isoform>
        <id>Q6UXG3-5</id>
        <name>5</name>
        <sequence type="described" ref="VSP_045362 VSP_028412"/>
    </isoform>
</comment>
<comment type="tissue specificity">
    <text evidence="9">Highly expressed in heart, skeletal muscle and placenta.</text>
</comment>
<comment type="domain">
    <text evidence="1">Ig-like V-type domain mediates binding to lymphocyte.</text>
</comment>
<comment type="PTM">
    <text evidence="1">O-glycosylated with sialylated oligosaccharides.</text>
</comment>
<comment type="similarity">
    <text evidence="12">Belongs to the CD300 family.</text>
</comment>
<dbReference type="EMBL" id="AF427619">
    <property type="protein sequence ID" value="AAN86134.1"/>
    <property type="molecule type" value="mRNA"/>
</dbReference>
<dbReference type="EMBL" id="AF427620">
    <property type="protein sequence ID" value="AAN86135.1"/>
    <property type="molecule type" value="mRNA"/>
</dbReference>
<dbReference type="EMBL" id="AY358364">
    <property type="protein sequence ID" value="AAQ88730.1"/>
    <property type="molecule type" value="mRNA"/>
</dbReference>
<dbReference type="EMBL" id="AK298112">
    <property type="protein sequence ID" value="BAG60397.1"/>
    <property type="molecule type" value="mRNA"/>
</dbReference>
<dbReference type="EMBL" id="AK309938">
    <property type="status" value="NOT_ANNOTATED_CDS"/>
    <property type="molecule type" value="mRNA"/>
</dbReference>
<dbReference type="EMBL" id="AC007993">
    <property type="status" value="NOT_ANNOTATED_CDS"/>
    <property type="molecule type" value="Genomic_DNA"/>
</dbReference>
<dbReference type="EMBL" id="AC015937">
    <property type="status" value="NOT_ANNOTATED_CDS"/>
    <property type="molecule type" value="Genomic_DNA"/>
</dbReference>
<dbReference type="EMBL" id="BC025395">
    <property type="protein sequence ID" value="AAH25395.1"/>
    <property type="molecule type" value="mRNA"/>
</dbReference>
<dbReference type="CCDS" id="CCDS11470.1">
    <molecule id="Q6UXG3-1"/>
</dbReference>
<dbReference type="CCDS" id="CCDS54131.1">
    <molecule id="Q6UXG3-4"/>
</dbReference>
<dbReference type="CCDS" id="CCDS54132.1">
    <molecule id="Q6UXG3-5"/>
</dbReference>
<dbReference type="CCDS" id="CCDS54133.1">
    <molecule id="Q6UXG3-2"/>
</dbReference>
<dbReference type="RefSeq" id="NP_001161794.1">
    <molecule id="Q6UXG3-4"/>
    <property type="nucleotide sequence ID" value="NM_001168322.2"/>
</dbReference>
<dbReference type="RefSeq" id="NP_001161795.1">
    <molecule id="Q6UXG3-5"/>
    <property type="nucleotide sequence ID" value="NM_001168323.2"/>
</dbReference>
<dbReference type="RefSeq" id="NP_001161796.1">
    <molecule id="Q6UXG3-2"/>
    <property type="nucleotide sequence ID" value="NM_001168324.2"/>
</dbReference>
<dbReference type="RefSeq" id="NP_660316.2">
    <molecule id="Q6UXG3-1"/>
    <property type="nucleotide sequence ID" value="NM_145273.4"/>
</dbReference>
<dbReference type="SMR" id="Q6UXG3"/>
<dbReference type="BioGRID" id="127023">
    <property type="interactions" value="8"/>
</dbReference>
<dbReference type="FunCoup" id="Q6UXG3">
    <property type="interactions" value="640"/>
</dbReference>
<dbReference type="IntAct" id="Q6UXG3">
    <property type="interactions" value="6"/>
</dbReference>
<dbReference type="STRING" id="9606.ENSP00000321005"/>
<dbReference type="GlyCosmos" id="Q6UXG3">
    <property type="glycosylation" value="25 sites, No reported glycans"/>
</dbReference>
<dbReference type="GlyGen" id="Q6UXG3">
    <property type="glycosylation" value="26 sites, 1 O-linked glycan (1 site)"/>
</dbReference>
<dbReference type="iPTMnet" id="Q6UXG3"/>
<dbReference type="PhosphoSitePlus" id="Q6UXG3"/>
<dbReference type="BioMuta" id="CD300LG"/>
<dbReference type="DMDM" id="296434455"/>
<dbReference type="MassIVE" id="Q6UXG3"/>
<dbReference type="PaxDb" id="9606-ENSP00000321005"/>
<dbReference type="PeptideAtlas" id="Q6UXG3"/>
<dbReference type="ProteomicsDB" id="27553"/>
<dbReference type="ProteomicsDB" id="30350"/>
<dbReference type="ProteomicsDB" id="67609">
    <molecule id="Q6UXG3-1"/>
</dbReference>
<dbReference type="ProteomicsDB" id="67610">
    <molecule id="Q6UXG3-2"/>
</dbReference>
<dbReference type="ProteomicsDB" id="67611">
    <molecule id="Q6UXG3-3"/>
</dbReference>
<dbReference type="Antibodypedia" id="1022">
    <property type="antibodies" value="117 antibodies from 20 providers"/>
</dbReference>
<dbReference type="DNASU" id="146894"/>
<dbReference type="Ensembl" id="ENST00000293396.12">
    <molecule id="Q6UXG3-2"/>
    <property type="protein sequence ID" value="ENSP00000293396.7"/>
    <property type="gene ID" value="ENSG00000161649.14"/>
</dbReference>
<dbReference type="Ensembl" id="ENST00000317310.5">
    <molecule id="Q6UXG3-1"/>
    <property type="protein sequence ID" value="ENSP00000321005.3"/>
    <property type="gene ID" value="ENSG00000161649.14"/>
</dbReference>
<dbReference type="Ensembl" id="ENST00000377203.8">
    <molecule id="Q6UXG3-5"/>
    <property type="protein sequence ID" value="ENSP00000366408.3"/>
    <property type="gene ID" value="ENSG00000161649.14"/>
</dbReference>
<dbReference type="Ensembl" id="ENST00000539718.5">
    <molecule id="Q6UXG3-4"/>
    <property type="protein sequence ID" value="ENSP00000442368.1"/>
    <property type="gene ID" value="ENSG00000161649.14"/>
</dbReference>
<dbReference type="Ensembl" id="ENST00000586233.5">
    <molecule id="Q6UXG3-3"/>
    <property type="protein sequence ID" value="ENSP00000468800.1"/>
    <property type="gene ID" value="ENSG00000161649.14"/>
</dbReference>
<dbReference type="GeneID" id="146894"/>
<dbReference type="KEGG" id="hsa:146894"/>
<dbReference type="MANE-Select" id="ENST00000317310.5">
    <property type="protein sequence ID" value="ENSP00000321005.3"/>
    <property type="RefSeq nucleotide sequence ID" value="NM_145273.4"/>
    <property type="RefSeq protein sequence ID" value="NP_660316.2"/>
</dbReference>
<dbReference type="UCSC" id="uc002iel.3">
    <molecule id="Q6UXG3-1"/>
    <property type="organism name" value="human"/>
</dbReference>
<dbReference type="AGR" id="HGNC:30455"/>
<dbReference type="CTD" id="146894"/>
<dbReference type="DisGeNET" id="146894"/>
<dbReference type="GeneCards" id="CD300LG"/>
<dbReference type="HGNC" id="HGNC:30455">
    <property type="gene designation" value="CD300LG"/>
</dbReference>
<dbReference type="HPA" id="ENSG00000161649">
    <property type="expression patterns" value="Tissue enhanced (adipose tissue, breast, placenta)"/>
</dbReference>
<dbReference type="MIM" id="610520">
    <property type="type" value="gene"/>
</dbReference>
<dbReference type="neXtProt" id="NX_Q6UXG3"/>
<dbReference type="OpenTargets" id="ENSG00000161649"/>
<dbReference type="PharmGKB" id="PA142672154"/>
<dbReference type="VEuPathDB" id="HostDB:ENSG00000161649"/>
<dbReference type="eggNOG" id="ENOG502SURU">
    <property type="taxonomic scope" value="Eukaryota"/>
</dbReference>
<dbReference type="GeneTree" id="ENSGT00940000162429"/>
<dbReference type="HOGENOM" id="CLU_051023_1_0_1"/>
<dbReference type="InParanoid" id="Q6UXG3"/>
<dbReference type="OMA" id="ERKKYWC"/>
<dbReference type="OrthoDB" id="8920197at2759"/>
<dbReference type="PAN-GO" id="Q6UXG3">
    <property type="GO annotations" value="2 GO annotations based on evolutionary models"/>
</dbReference>
<dbReference type="PhylomeDB" id="Q6UXG3"/>
<dbReference type="TreeFam" id="TF334441"/>
<dbReference type="PathwayCommons" id="Q6UXG3"/>
<dbReference type="Reactome" id="R-HSA-198933">
    <property type="pathway name" value="Immunoregulatory interactions between a Lymphoid and a non-Lymphoid cell"/>
</dbReference>
<dbReference type="SignaLink" id="Q6UXG3"/>
<dbReference type="BioGRID-ORCS" id="146894">
    <property type="hits" value="14 hits in 1145 CRISPR screens"/>
</dbReference>
<dbReference type="GenomeRNAi" id="146894"/>
<dbReference type="Pharos" id="Q6UXG3">
    <property type="development level" value="Tbio"/>
</dbReference>
<dbReference type="PRO" id="PR:Q6UXG3"/>
<dbReference type="Proteomes" id="UP000005640">
    <property type="component" value="Chromosome 17"/>
</dbReference>
<dbReference type="RNAct" id="Q6UXG3">
    <property type="molecule type" value="protein"/>
</dbReference>
<dbReference type="Bgee" id="ENSG00000161649">
    <property type="expression patterns" value="Expressed in adipose tissue of abdominal region and 150 other cell types or tissues"/>
</dbReference>
<dbReference type="ExpressionAtlas" id="Q6UXG3">
    <property type="expression patterns" value="baseline and differential"/>
</dbReference>
<dbReference type="GO" id="GO:0016324">
    <property type="term" value="C:apical plasma membrane"/>
    <property type="evidence" value="ECO:0007669"/>
    <property type="project" value="UniProtKB-SubCell"/>
</dbReference>
<dbReference type="GO" id="GO:0016323">
    <property type="term" value="C:basolateral plasma membrane"/>
    <property type="evidence" value="ECO:0007669"/>
    <property type="project" value="UniProtKB-SubCell"/>
</dbReference>
<dbReference type="GO" id="GO:0032585">
    <property type="term" value="C:multivesicular body membrane"/>
    <property type="evidence" value="ECO:0007669"/>
    <property type="project" value="UniProtKB-SubCell"/>
</dbReference>
<dbReference type="GO" id="GO:0005886">
    <property type="term" value="C:plasma membrane"/>
    <property type="evidence" value="ECO:0000318"/>
    <property type="project" value="GO_Central"/>
</dbReference>
<dbReference type="GO" id="GO:0004888">
    <property type="term" value="F:transmembrane signaling receptor activity"/>
    <property type="evidence" value="ECO:0000318"/>
    <property type="project" value="GO_Central"/>
</dbReference>
<dbReference type="GO" id="GO:0002376">
    <property type="term" value="P:immune system process"/>
    <property type="evidence" value="ECO:0007669"/>
    <property type="project" value="UniProtKB-KW"/>
</dbReference>
<dbReference type="GO" id="GO:0007165">
    <property type="term" value="P:signal transduction"/>
    <property type="evidence" value="ECO:0000318"/>
    <property type="project" value="GO_Central"/>
</dbReference>
<dbReference type="CDD" id="cd05716">
    <property type="entry name" value="IgV_pIgR_like"/>
    <property type="match status" value="1"/>
</dbReference>
<dbReference type="FunFam" id="2.60.40.10:FF:000370">
    <property type="entry name" value="CMRF35-like molecule 1"/>
    <property type="match status" value="1"/>
</dbReference>
<dbReference type="Gene3D" id="2.60.40.10">
    <property type="entry name" value="Immunoglobulins"/>
    <property type="match status" value="1"/>
</dbReference>
<dbReference type="InterPro" id="IPR050671">
    <property type="entry name" value="CD300_family_receptors"/>
</dbReference>
<dbReference type="InterPro" id="IPR007110">
    <property type="entry name" value="Ig-like_dom"/>
</dbReference>
<dbReference type="InterPro" id="IPR036179">
    <property type="entry name" value="Ig-like_dom_sf"/>
</dbReference>
<dbReference type="InterPro" id="IPR013783">
    <property type="entry name" value="Ig-like_fold"/>
</dbReference>
<dbReference type="InterPro" id="IPR003599">
    <property type="entry name" value="Ig_sub"/>
</dbReference>
<dbReference type="InterPro" id="IPR013106">
    <property type="entry name" value="Ig_V-set"/>
</dbReference>
<dbReference type="PANTHER" id="PTHR11860:SF62">
    <property type="entry name" value="CMRF35-LIKE MOLECULE 9"/>
    <property type="match status" value="1"/>
</dbReference>
<dbReference type="PANTHER" id="PTHR11860">
    <property type="entry name" value="POLYMERIC-IMMUNOGLOBULIN RECEPTOR"/>
    <property type="match status" value="1"/>
</dbReference>
<dbReference type="Pfam" id="PF07686">
    <property type="entry name" value="V-set"/>
    <property type="match status" value="1"/>
</dbReference>
<dbReference type="SMART" id="SM00409">
    <property type="entry name" value="IG"/>
    <property type="match status" value="1"/>
</dbReference>
<dbReference type="SUPFAM" id="SSF48726">
    <property type="entry name" value="Immunoglobulin"/>
    <property type="match status" value="1"/>
</dbReference>
<dbReference type="PROSITE" id="PS50835">
    <property type="entry name" value="IG_LIKE"/>
    <property type="match status" value="1"/>
</dbReference>
<feature type="signal peptide" evidence="7">
    <location>
        <begin position="1"/>
        <end position="18"/>
    </location>
</feature>
<feature type="chain" id="PRO_0000306112" description="CMRF35-like molecule 9">
    <location>
        <begin position="19"/>
        <end position="332"/>
    </location>
</feature>
<feature type="topological domain" description="Extracellular" evidence="3">
    <location>
        <begin position="19"/>
        <end position="247"/>
    </location>
</feature>
<feature type="transmembrane region" description="Helical" evidence="3">
    <location>
        <begin position="248"/>
        <end position="268"/>
    </location>
</feature>
<feature type="topological domain" description="Cytoplasmic" evidence="3">
    <location>
        <begin position="269"/>
        <end position="332"/>
    </location>
</feature>
<feature type="domain" description="Ig-like V-type">
    <location>
        <begin position="19"/>
        <end position="121"/>
    </location>
</feature>
<feature type="region of interest" description="Disordered" evidence="5">
    <location>
        <begin position="146"/>
        <end position="239"/>
    </location>
</feature>
<feature type="compositionally biased region" description="Low complexity" evidence="5">
    <location>
        <begin position="147"/>
        <end position="158"/>
    </location>
</feature>
<feature type="compositionally biased region" description="Low complexity" evidence="5">
    <location>
        <begin position="168"/>
        <end position="181"/>
    </location>
</feature>
<feature type="compositionally biased region" description="Polar residues" evidence="5">
    <location>
        <begin position="186"/>
        <end position="205"/>
    </location>
</feature>
<feature type="compositionally biased region" description="Polar residues" evidence="5">
    <location>
        <begin position="220"/>
        <end position="239"/>
    </location>
</feature>
<feature type="glycosylation site" description="N-linked (GlcNAc...) asparagine" evidence="3">
    <location>
        <position position="96"/>
    </location>
</feature>
<feature type="glycosylation site" description="O-linked (GalNAc...) threonine" evidence="3">
    <location>
        <position position="137"/>
    </location>
</feature>
<feature type="glycosylation site" description="O-linked (GalNAc...) threonine" evidence="3">
    <location>
        <position position="143"/>
    </location>
</feature>
<feature type="glycosylation site" description="O-linked (GalNAc...) threonine" evidence="3">
    <location>
        <position position="144"/>
    </location>
</feature>
<feature type="glycosylation site" description="O-linked (GalNAc...) threonine" evidence="3">
    <location>
        <position position="155"/>
    </location>
</feature>
<feature type="glycosylation site" description="O-linked (GalNAc...) threonine" evidence="3">
    <location>
        <position position="161"/>
    </location>
</feature>
<feature type="glycosylation site" description="O-linked (GalNAc...) threonine" evidence="3">
    <location>
        <position position="170"/>
    </location>
</feature>
<feature type="glycosylation site" description="O-linked (GalNAc...) threonine" evidence="3">
    <location>
        <position position="171"/>
    </location>
</feature>
<feature type="glycosylation site" description="O-linked (GalNAc...) threonine" evidence="3">
    <location>
        <position position="177"/>
    </location>
</feature>
<feature type="glycosylation site" description="O-linked (GalNAc...) threonine" evidence="3">
    <location>
        <position position="187"/>
    </location>
</feature>
<feature type="glycosylation site" description="O-linked (GalNAc...) threonine" evidence="3">
    <location>
        <position position="195"/>
    </location>
</feature>
<feature type="glycosylation site" description="O-linked (GalNAc...) serine" evidence="3">
    <location>
        <position position="196"/>
    </location>
</feature>
<feature type="glycosylation site" description="O-linked (GalNAc...) threonine" evidence="3">
    <location>
        <position position="199"/>
    </location>
</feature>
<feature type="glycosylation site" description="O-linked (GalNAc...) threonine" evidence="3">
    <location>
        <position position="201"/>
    </location>
</feature>
<feature type="glycosylation site" description="O-linked (GalNAc...) serine" evidence="3">
    <location>
        <position position="202"/>
    </location>
</feature>
<feature type="glycosylation site" description="O-linked (GalNAc...) threonine" evidence="3">
    <location>
        <position position="207"/>
    </location>
</feature>
<feature type="glycosylation site" description="O-linked (GalNAc...) serine" evidence="3">
    <location>
        <position position="208"/>
    </location>
</feature>
<feature type="glycosylation site" description="O-linked (GalNAc...) serine" evidence="3">
    <location>
        <position position="213"/>
    </location>
</feature>
<feature type="glycosylation site" description="O-linked (GalNAc...) serine" evidence="3">
    <location>
        <position position="214"/>
    </location>
</feature>
<feature type="glycosylation site" description="O-linked (GalNAc...) serine" evidence="3">
    <location>
        <position position="222"/>
    </location>
</feature>
<feature type="glycosylation site" description="O-linked (GalNAc...) threonine" evidence="3">
    <location>
        <position position="223"/>
    </location>
</feature>
<feature type="glycosylation site" description="O-linked (GalNAc...) serine" evidence="3">
    <location>
        <position position="224"/>
    </location>
</feature>
<feature type="glycosylation site" description="O-linked (GalNAc...) threonine" evidence="3">
    <location>
        <position position="228"/>
    </location>
</feature>
<feature type="glycosylation site" description="O-linked (GalNAc...) serine" evidence="3">
    <location>
        <position position="229"/>
    </location>
</feature>
<feature type="glycosylation site" description="O-linked (GalNAc...) serine" evidence="3">
    <location>
        <position position="237"/>
    </location>
</feature>
<feature type="disulfide bond" evidence="4">
    <location>
        <begin position="37"/>
        <end position="107"/>
    </location>
</feature>
<feature type="splice variant" id="VSP_028410" description="In isoform 2 and isoform 3." evidence="11">
    <location>
        <begin position="127"/>
        <end position="211"/>
    </location>
</feature>
<feature type="splice variant" id="VSP_045362" description="In isoform 5." evidence="10">
    <original>GPCCPPSPSPTFQPLATTRLQPKAKAQQTQPPGLT</original>
    <variation>A</variation>
    <location>
        <begin position="127"/>
        <end position="161"/>
    </location>
</feature>
<feature type="splice variant" id="VSP_028411" description="In isoform 2." evidence="11">
    <original>TAEEKEAPSQAPEGDVISMPPLHTSEEELGFSKFVSA</original>
    <variation>NHRTSELDPDEAFEISSLTFLSV</variation>
    <location>
        <begin position="296"/>
        <end position="332"/>
    </location>
</feature>
<feature type="splice variant" id="VSP_028412" description="In isoform 3, isoform 4 and isoform 5." evidence="10 11">
    <original>TAEEKEAPSQAPEGDVISMPPLHTSEEELGFSKFVSA</original>
    <variation>NSLMFSLSLPWL</variation>
    <location>
        <begin position="296"/>
        <end position="332"/>
    </location>
</feature>
<feature type="sequence variant" id="VAR_035261" description="In dbSNP:rs17852267." evidence="8">
    <original>D</original>
    <variation>N</variation>
    <location>
        <position position="221"/>
    </location>
</feature>
<feature type="sequence variant" id="VAR_035262" description="In dbSNP:rs12453522." evidence="6">
    <original>T</original>
    <variation>A</variation>
    <location>
        <position position="228"/>
    </location>
</feature>
<feature type="sequence conflict" description="In Ref. 1; AAN86134/AAN86135." evidence="12" ref="1">
    <original>C</original>
    <variation>W</variation>
    <location>
        <position position="10"/>
    </location>
</feature>
<feature type="sequence conflict" description="In Ref. 1; AAN86134/AAN86135." evidence="12" ref="1">
    <original>D</original>
    <variation>G</variation>
    <location>
        <position position="45"/>
    </location>
</feature>
<feature type="sequence conflict" description="In Ref. 1; AAN86134/AAN86135." evidence="12" ref="1">
    <original>T</original>
    <variation>H</variation>
    <location>
        <position position="64"/>
    </location>
</feature>
<feature type="sequence conflict" description="In Ref. 1; AAN86134/AAN86135." evidence="12" ref="1">
    <original>V</original>
    <variation>L</variation>
    <location>
        <position position="79"/>
    </location>
</feature>
<feature type="sequence conflict" description="In Ref. 1; AAN86134/AAN86135." evidence="12" ref="1">
    <original>G</original>
    <variation>A</variation>
    <location>
        <position position="113"/>
    </location>
</feature>
<feature type="sequence conflict" description="In Ref. 2; AAQ88730." evidence="12" ref="2">
    <original>C</original>
    <variation>W</variation>
    <location>
        <position position="291"/>
    </location>
</feature>